<organism>
    <name type="scientific">Christiangramia forsetii (strain DSM 17595 / CGMCC 1.15422 / KT0803)</name>
    <name type="common">Gramella forsetii</name>
    <dbReference type="NCBI Taxonomy" id="411154"/>
    <lineage>
        <taxon>Bacteria</taxon>
        <taxon>Pseudomonadati</taxon>
        <taxon>Bacteroidota</taxon>
        <taxon>Flavobacteriia</taxon>
        <taxon>Flavobacteriales</taxon>
        <taxon>Flavobacteriaceae</taxon>
        <taxon>Christiangramia</taxon>
    </lineage>
</organism>
<name>RL30_CHRFK</name>
<protein>
    <recommendedName>
        <fullName evidence="1">Large ribosomal subunit protein uL30</fullName>
    </recommendedName>
    <alternativeName>
        <fullName evidence="2">50S ribosomal protein L30</fullName>
    </alternativeName>
</protein>
<reference key="1">
    <citation type="journal article" date="2006" name="Environ. Microbiol.">
        <title>Whole genome analysis of the marine Bacteroidetes'Gramella forsetii' reveals adaptations to degradation of polymeric organic matter.</title>
        <authorList>
            <person name="Bauer M."/>
            <person name="Kube M."/>
            <person name="Teeling H."/>
            <person name="Richter M."/>
            <person name="Lombardot T."/>
            <person name="Allers E."/>
            <person name="Wuerdemann C.A."/>
            <person name="Quast C."/>
            <person name="Kuhl H."/>
            <person name="Knaust F."/>
            <person name="Woebken D."/>
            <person name="Bischof K."/>
            <person name="Mussmann M."/>
            <person name="Choudhuri J.V."/>
            <person name="Meyer F."/>
            <person name="Reinhardt R."/>
            <person name="Amann R.I."/>
            <person name="Gloeckner F.O."/>
        </authorList>
    </citation>
    <scope>NUCLEOTIDE SEQUENCE [LARGE SCALE GENOMIC DNA]</scope>
    <source>
        <strain>DSM 17595 / CGMCC 1.15422 / KT0803</strain>
    </source>
</reference>
<comment type="subunit">
    <text evidence="1">Part of the 50S ribosomal subunit.</text>
</comment>
<comment type="similarity">
    <text evidence="1">Belongs to the universal ribosomal protein uL30 family.</text>
</comment>
<comment type="sequence caution" evidence="2">
    <conflict type="erroneous initiation">
        <sequence resource="EMBL-CDS" id="CAL67775"/>
    </conflict>
</comment>
<keyword id="KW-0687">Ribonucleoprotein</keyword>
<keyword id="KW-0689">Ribosomal protein</keyword>
<proteinExistence type="inferred from homology"/>
<dbReference type="EMBL" id="CU207366">
    <property type="protein sequence ID" value="CAL67775.1"/>
    <property type="status" value="ALT_INIT"/>
    <property type="molecule type" value="Genomic_DNA"/>
</dbReference>
<dbReference type="RefSeq" id="WP_026933557.1">
    <property type="nucleotide sequence ID" value="NC_008571.1"/>
</dbReference>
<dbReference type="SMR" id="A0M580"/>
<dbReference type="STRING" id="411154.GFO_2821"/>
<dbReference type="KEGG" id="gfo:GFO_2821"/>
<dbReference type="eggNOG" id="COG1841">
    <property type="taxonomic scope" value="Bacteria"/>
</dbReference>
<dbReference type="HOGENOM" id="CLU_131047_1_1_10"/>
<dbReference type="OrthoDB" id="9812790at2"/>
<dbReference type="Proteomes" id="UP000000755">
    <property type="component" value="Chromosome"/>
</dbReference>
<dbReference type="GO" id="GO:0022625">
    <property type="term" value="C:cytosolic large ribosomal subunit"/>
    <property type="evidence" value="ECO:0007669"/>
    <property type="project" value="TreeGrafter"/>
</dbReference>
<dbReference type="GO" id="GO:0003735">
    <property type="term" value="F:structural constituent of ribosome"/>
    <property type="evidence" value="ECO:0007669"/>
    <property type="project" value="InterPro"/>
</dbReference>
<dbReference type="GO" id="GO:0006412">
    <property type="term" value="P:translation"/>
    <property type="evidence" value="ECO:0007669"/>
    <property type="project" value="UniProtKB-UniRule"/>
</dbReference>
<dbReference type="CDD" id="cd01658">
    <property type="entry name" value="Ribosomal_L30"/>
    <property type="match status" value="1"/>
</dbReference>
<dbReference type="FunFam" id="3.30.1390.20:FF:000001">
    <property type="entry name" value="50S ribosomal protein L30"/>
    <property type="match status" value="1"/>
</dbReference>
<dbReference type="Gene3D" id="3.30.1390.20">
    <property type="entry name" value="Ribosomal protein L30, ferredoxin-like fold domain"/>
    <property type="match status" value="1"/>
</dbReference>
<dbReference type="HAMAP" id="MF_01371_B">
    <property type="entry name" value="Ribosomal_uL30_B"/>
    <property type="match status" value="1"/>
</dbReference>
<dbReference type="InterPro" id="IPR036919">
    <property type="entry name" value="Ribo_uL30_ferredoxin-like_sf"/>
</dbReference>
<dbReference type="InterPro" id="IPR005996">
    <property type="entry name" value="Ribosomal_uL30_bac-type"/>
</dbReference>
<dbReference type="InterPro" id="IPR018038">
    <property type="entry name" value="Ribosomal_uL30_CS"/>
</dbReference>
<dbReference type="InterPro" id="IPR016082">
    <property type="entry name" value="Ribosomal_uL30_ferredoxin-like"/>
</dbReference>
<dbReference type="NCBIfam" id="TIGR01308">
    <property type="entry name" value="rpmD_bact"/>
    <property type="match status" value="1"/>
</dbReference>
<dbReference type="PANTHER" id="PTHR15892:SF2">
    <property type="entry name" value="LARGE RIBOSOMAL SUBUNIT PROTEIN UL30M"/>
    <property type="match status" value="1"/>
</dbReference>
<dbReference type="PANTHER" id="PTHR15892">
    <property type="entry name" value="MITOCHONDRIAL RIBOSOMAL PROTEIN L30"/>
    <property type="match status" value="1"/>
</dbReference>
<dbReference type="Pfam" id="PF00327">
    <property type="entry name" value="Ribosomal_L30"/>
    <property type="match status" value="1"/>
</dbReference>
<dbReference type="PIRSF" id="PIRSF002211">
    <property type="entry name" value="Ribosomal_L30_bac-type"/>
    <property type="match status" value="1"/>
</dbReference>
<dbReference type="SUPFAM" id="SSF55129">
    <property type="entry name" value="Ribosomal protein L30p/L7e"/>
    <property type="match status" value="1"/>
</dbReference>
<dbReference type="PROSITE" id="PS00634">
    <property type="entry name" value="RIBOSOMAL_L30"/>
    <property type="match status" value="1"/>
</dbReference>
<evidence type="ECO:0000255" key="1">
    <source>
        <dbReference type="HAMAP-Rule" id="MF_01371"/>
    </source>
</evidence>
<evidence type="ECO:0000305" key="2"/>
<sequence length="60" mass="6668">MGKIKVTKVKSAINRTKNQKLVLESLGLKKIGQTVEHDDTPNILGMVNKVKHLVSVEETK</sequence>
<feature type="chain" id="PRO_0000347101" description="Large ribosomal subunit protein uL30">
    <location>
        <begin position="1"/>
        <end position="60"/>
    </location>
</feature>
<gene>
    <name evidence="1" type="primary">rpmD</name>
    <name type="ordered locus">GFO_2821</name>
</gene>
<accession>A0M580</accession>